<protein>
    <recommendedName>
        <fullName evidence="19 20">Multiple inositol polyphosphate phosphatase 1</fullName>
        <ecNumber evidence="12">3.1.3.62</ecNumber>
    </recommendedName>
    <alternativeName>
        <fullName evidence="15">2,3-bisphosphoglycerate 3-phosphatase</fullName>
        <shortName evidence="15">2,3-BPG phosphatase</shortName>
        <ecNumber evidence="9">3.1.3.80</ecNumber>
    </alternativeName>
</protein>
<organism>
    <name type="scientific">Homo sapiens</name>
    <name type="common">Human</name>
    <dbReference type="NCBI Taxonomy" id="9606"/>
    <lineage>
        <taxon>Eukaryota</taxon>
        <taxon>Metazoa</taxon>
        <taxon>Chordata</taxon>
        <taxon>Craniata</taxon>
        <taxon>Vertebrata</taxon>
        <taxon>Euteleostomi</taxon>
        <taxon>Mammalia</taxon>
        <taxon>Eutheria</taxon>
        <taxon>Euarchontoglires</taxon>
        <taxon>Primates</taxon>
        <taxon>Haplorrhini</taxon>
        <taxon>Catarrhini</taxon>
        <taxon>Hominidae</taxon>
        <taxon>Homo</taxon>
    </lineage>
</organism>
<gene>
    <name evidence="21" type="primary">MINPP1</name>
    <name evidence="16" type="synonym">MIPP</name>
    <name type="ORF">UNQ900/PRO1917</name>
</gene>
<comment type="function">
    <text evidence="9 11 12">Multiple inositol polyphosphate phosphatase that hydrolyzes 1D-myo-inositol 1,3,4,5,6-pentakisphosphate (InsP5[2OH]) and 1D-myo-inositol hexakisphosphate (InsP6) to a range of less phosphorylated inositol phosphates. This regulates the availability of these various small molecule second messengers and metal chelators which control many aspects of cell physiology (PubMed:33257696, PubMed:36589890). Has a weak in vitro activity towards 1D-myo-inositol 1,4,5-trisphosphate which is unlikely to be physiologically relevant (PubMed:36589890). By regulating intracellular inositol polyphosphates pools, which act as metal chelators, it may control the availability of intracellular calcium and iron, which are important for proper neuronal development and homeostasis (PubMed:33257696). May have a dual substrate specificity, and function as a 2,3-bisphosphoglycerate 3-phosphatase hydrolyzing 2,3-bisphosphoglycerate to 2-phosphoglycerate. 2,3-bisphosphoglycerate (BPG) is formed as part of the Rapoport-Luebering glycolytic bypass and is a regulator of systemic oxygen homeostasis as the major allosteric effector of hemoglobin (PubMed:18413611).</text>
</comment>
<comment type="catalytic activity">
    <reaction evidence="8 11 12">
        <text>1D-myo-inositol hexakisphosphate + H2O = 1D-myo-inositol 1,2,4,5,6-pentakisphosphate + phosphate</text>
        <dbReference type="Rhea" id="RHEA:16989"/>
        <dbReference type="ChEBI" id="CHEBI:15377"/>
        <dbReference type="ChEBI" id="CHEBI:43474"/>
        <dbReference type="ChEBI" id="CHEBI:57798"/>
        <dbReference type="ChEBI" id="CHEBI:58130"/>
        <dbReference type="EC" id="3.1.3.62"/>
    </reaction>
    <physiologicalReaction direction="left-to-right" evidence="12">
        <dbReference type="Rhea" id="RHEA:16990"/>
    </physiologicalReaction>
</comment>
<comment type="catalytic activity">
    <reaction evidence="12">
        <text>1D-myo-inositol 1,2,4,5,6-pentakisphosphate + H2O = 1D-myo-inositol 1,2,5,6-tetrakisphosphate + phosphate</text>
        <dbReference type="Rhea" id="RHEA:77115"/>
        <dbReference type="ChEBI" id="CHEBI:15377"/>
        <dbReference type="ChEBI" id="CHEBI:43474"/>
        <dbReference type="ChEBI" id="CHEBI:57798"/>
        <dbReference type="ChEBI" id="CHEBI:195535"/>
        <dbReference type="EC" id="3.1.3.62"/>
    </reaction>
    <physiologicalReaction direction="left-to-right" evidence="12">
        <dbReference type="Rhea" id="RHEA:77116"/>
    </physiologicalReaction>
</comment>
<comment type="catalytic activity">
    <reaction evidence="12">
        <text>1D-myo-inositol 1,2,5,6-tetrakisphosphate + H2O = 1D-myo-inositol 1,2,6-trisphosphate + phosphate</text>
        <dbReference type="Rhea" id="RHEA:77119"/>
        <dbReference type="ChEBI" id="CHEBI:15377"/>
        <dbReference type="ChEBI" id="CHEBI:43474"/>
        <dbReference type="ChEBI" id="CHEBI:195535"/>
        <dbReference type="ChEBI" id="CHEBI:195537"/>
        <dbReference type="EC" id="3.1.3.62"/>
    </reaction>
    <physiologicalReaction direction="left-to-right" evidence="12">
        <dbReference type="Rhea" id="RHEA:77120"/>
    </physiologicalReaction>
</comment>
<comment type="catalytic activity">
    <reaction evidence="12">
        <text>1D-myo-inositol 1,2,6-trisphosphate + H2O = 1D-myo-inositol 1,2-bisphosphate + phosphate</text>
        <dbReference type="Rhea" id="RHEA:77131"/>
        <dbReference type="ChEBI" id="CHEBI:15377"/>
        <dbReference type="ChEBI" id="CHEBI:43474"/>
        <dbReference type="ChEBI" id="CHEBI:195537"/>
        <dbReference type="ChEBI" id="CHEBI:195539"/>
        <dbReference type="EC" id="3.1.3.62"/>
    </reaction>
    <physiologicalReaction direction="left-to-right" evidence="12">
        <dbReference type="Rhea" id="RHEA:77132"/>
    </physiologicalReaction>
</comment>
<comment type="catalytic activity">
    <reaction evidence="12">
        <text>1D-myo-inositol 1,2-bisphosphate + H2O = 1D-myo-inositol 2-phosphate + phosphate</text>
        <dbReference type="Rhea" id="RHEA:77135"/>
        <dbReference type="ChEBI" id="CHEBI:15377"/>
        <dbReference type="ChEBI" id="CHEBI:43474"/>
        <dbReference type="ChEBI" id="CHEBI:84142"/>
        <dbReference type="ChEBI" id="CHEBI:195539"/>
        <dbReference type="EC" id="3.1.3.62"/>
    </reaction>
    <physiologicalReaction direction="left-to-right" evidence="12">
        <dbReference type="Rhea" id="RHEA:77136"/>
    </physiologicalReaction>
</comment>
<comment type="catalytic activity">
    <reaction evidence="8 12">
        <text>1D-myo-inositol hexakisphosphate + H2O = 1D-myo-inositol 1,2,3,5,6-pentakisphosphate + phosphate</text>
        <dbReference type="Rhea" id="RHEA:20960"/>
        <dbReference type="ChEBI" id="CHEBI:15377"/>
        <dbReference type="ChEBI" id="CHEBI:43474"/>
        <dbReference type="ChEBI" id="CHEBI:58130"/>
        <dbReference type="ChEBI" id="CHEBI:58747"/>
    </reaction>
    <physiologicalReaction direction="left-to-right" evidence="12">
        <dbReference type="Rhea" id="RHEA:20961"/>
    </physiologicalReaction>
</comment>
<comment type="catalytic activity">
    <reaction evidence="12">
        <text>1D-myo-inositol 1,2,3,5,6-pentakisphosphate + H2O = 1D-myo-inositol 1,2,3,6-tetrakisphosphate + phosphate</text>
        <dbReference type="Rhea" id="RHEA:77111"/>
        <dbReference type="ChEBI" id="CHEBI:15377"/>
        <dbReference type="ChEBI" id="CHEBI:43474"/>
        <dbReference type="ChEBI" id="CHEBI:58747"/>
        <dbReference type="ChEBI" id="CHEBI:195534"/>
    </reaction>
    <physiologicalReaction direction="left-to-right" evidence="12">
        <dbReference type="Rhea" id="RHEA:77112"/>
    </physiologicalReaction>
</comment>
<comment type="catalytic activity">
    <reaction evidence="12">
        <text>1D-myo-inositol 1,2,3,6-tetrakisphosphate + H2O = 1D-myo-inositol 1,2,3-trisphosphate + phosphate</text>
        <dbReference type="Rhea" id="RHEA:77123"/>
        <dbReference type="ChEBI" id="CHEBI:15377"/>
        <dbReference type="ChEBI" id="CHEBI:43474"/>
        <dbReference type="ChEBI" id="CHEBI:195534"/>
        <dbReference type="ChEBI" id="CHEBI:195536"/>
    </reaction>
    <physiologicalReaction direction="left-to-right" evidence="12">
        <dbReference type="Rhea" id="RHEA:77124"/>
    </physiologicalReaction>
</comment>
<comment type="catalytic activity">
    <reaction evidence="12">
        <text>1D-myo-inositol 1,2,3-trisphosphate + H2O = 1D-myo-inositol 2,3-bisphosphate + phosphate</text>
        <dbReference type="Rhea" id="RHEA:77127"/>
        <dbReference type="ChEBI" id="CHEBI:15377"/>
        <dbReference type="ChEBI" id="CHEBI:43474"/>
        <dbReference type="ChEBI" id="CHEBI:195536"/>
        <dbReference type="ChEBI" id="CHEBI:195538"/>
    </reaction>
    <physiologicalReaction direction="left-to-right" evidence="12">
        <dbReference type="Rhea" id="RHEA:77128"/>
    </physiologicalReaction>
</comment>
<comment type="catalytic activity">
    <reaction evidence="12">
        <text>1D-myo-inositol 2,3-bisphosphate + H2O = 1D-myo-inositol 2-phosphate + phosphate</text>
        <dbReference type="Rhea" id="RHEA:77139"/>
        <dbReference type="ChEBI" id="CHEBI:15377"/>
        <dbReference type="ChEBI" id="CHEBI:43474"/>
        <dbReference type="ChEBI" id="CHEBI:84142"/>
        <dbReference type="ChEBI" id="CHEBI:195538"/>
    </reaction>
    <physiologicalReaction direction="left-to-right" evidence="12">
        <dbReference type="Rhea" id="RHEA:77140"/>
    </physiologicalReaction>
</comment>
<comment type="catalytic activity">
    <reaction evidence="12">
        <text>1D-myo-inositol 1,3,4,5,6-pentakisphosphate + H2O = 1D-myo-inositol 1,4,5,6-tetrakisphosphate + phosphate</text>
        <dbReference type="Rhea" id="RHEA:77143"/>
        <dbReference type="ChEBI" id="CHEBI:15377"/>
        <dbReference type="ChEBI" id="CHEBI:43474"/>
        <dbReference type="ChEBI" id="CHEBI:57627"/>
        <dbReference type="ChEBI" id="CHEBI:57733"/>
    </reaction>
    <physiologicalReaction direction="left-to-right" evidence="12">
        <dbReference type="Rhea" id="RHEA:77144"/>
    </physiologicalReaction>
</comment>
<comment type="catalytic activity">
    <reaction evidence="12">
        <text>1D-myo-inositol 1,4,5,6-tetrakisphosphate + H2O = 1D-myo-inositol 1,4,5-trisphosphate + phosphate</text>
        <dbReference type="Rhea" id="RHEA:77147"/>
        <dbReference type="ChEBI" id="CHEBI:15377"/>
        <dbReference type="ChEBI" id="CHEBI:43474"/>
        <dbReference type="ChEBI" id="CHEBI:57627"/>
        <dbReference type="ChEBI" id="CHEBI:203600"/>
    </reaction>
    <physiologicalReaction direction="left-to-right" evidence="12">
        <dbReference type="Rhea" id="RHEA:77148"/>
    </physiologicalReaction>
</comment>
<comment type="catalytic activity">
    <reaction evidence="9">
        <text>(2R)-2,3-bisphosphoglycerate + H2O = (2R)-2-phosphoglycerate + phosphate</text>
        <dbReference type="Rhea" id="RHEA:27381"/>
        <dbReference type="ChEBI" id="CHEBI:15377"/>
        <dbReference type="ChEBI" id="CHEBI:43474"/>
        <dbReference type="ChEBI" id="CHEBI:58248"/>
        <dbReference type="ChEBI" id="CHEBI:58289"/>
        <dbReference type="EC" id="3.1.3.80"/>
    </reaction>
    <physiologicalReaction direction="left-to-right" evidence="9">
        <dbReference type="Rhea" id="RHEA:27382"/>
    </physiologicalReaction>
</comment>
<comment type="biophysicochemical properties">
    <kinetics>
        <KM evidence="9">0.61 mM for 2,3-bisphosphoglycerate</KM>
        <KM evidence="8">90 uM for 1D-myo-inositol hexakisphosphate</KM>
        <Vmax evidence="9">15.8 nmol/min/mg enzyme with 2,3-bisphospho-D-glycerate as substrate</Vmax>
        <Vmax evidence="8">6.2 nmol/min/mg enzyme with 1D-myo-inositol hexakisphosphate as substrate</Vmax>
    </kinetics>
</comment>
<comment type="interaction">
    <interactant intactId="EBI-4290963">
        <id>Q9UNW1</id>
    </interactant>
    <interactant intactId="EBI-947187">
        <id>Q9UHD9</id>
        <label>UBQLN2</label>
    </interactant>
    <organismsDiffer>false</organismsDiffer>
    <experiments>3</experiments>
</comment>
<comment type="subcellular location">
    <subcellularLocation>
        <location evidence="2">Endoplasmic reticulum lumen</location>
    </subcellularLocation>
    <subcellularLocation>
        <location evidence="11">Secreted</location>
    </subcellularLocation>
    <subcellularLocation>
        <location evidence="3">Cell membrane</location>
    </subcellularLocation>
    <text evidence="3">Also associated with the plasma membrane in erythrocytes.</text>
</comment>
<comment type="alternative products">
    <event type="alternative splicing"/>
    <isoform>
        <id>Q9UNW1-1</id>
        <name>1</name>
        <sequence type="displayed"/>
    </isoform>
    <isoform>
        <id>Q9UNW1-2</id>
        <name>2</name>
        <sequence type="described" ref="VSP_014552 VSP_014555"/>
    </isoform>
    <isoform>
        <id>Q9UNW1-3</id>
        <name>3</name>
        <sequence type="described" ref="VSP_014553 VSP_014554"/>
    </isoform>
    <isoform>
        <id>Q9UNW1-4</id>
        <name>4</name>
        <sequence type="described" ref="VSP_044569"/>
    </isoform>
</comment>
<comment type="tissue specificity">
    <text evidence="10 11 13">Widely expressed with highest levels in kidney, liver, cerebellum and placenta.</text>
</comment>
<comment type="PTM">
    <text evidence="11">N-glycosylated.</text>
</comment>
<comment type="disease" evidence="6">
    <disease id="DI-04532">
        <name>Thyroid cancer, non-medullary, 2</name>
        <acronym>NMTC2</acronym>
        <description>A form of non-medullary thyroid cancer (NMTC), a cancer characterized by tumors originating from the thyroid follicular cells. NMTCs represent approximately 95% of all cases of thyroid cancer and are classified into papillary, follicular, Hurthle cell, and anaplastic neoplasms.</description>
        <dbReference type="MIM" id="188470"/>
    </disease>
    <text>Disease susceptibility is associated with variants affecting the gene represented in this entry.</text>
</comment>
<comment type="disease" evidence="10 11">
    <disease id="DI-06227">
        <name>Pontocerebellar hypoplasia 16</name>
        <acronym>PCH16</acronym>
        <description>A form of pontocerebellar hypoplasia, a disorder characterized by structural defects of the pons and cerebellum, evident upon brain imaging. PCH16 is an autosomal recessive, severe form characterized by hypotonia and severe global developmental delay apparent from early infancy. Other features may include stereotypic movements, spasticity, and progressive microcephaly.</description>
        <dbReference type="MIM" id="619527"/>
    </disease>
    <text>The disease is caused by variants affecting the gene represented in this entry.</text>
</comment>
<comment type="similarity">
    <text evidence="18">Belongs to the histidine acid phosphatase family. MINPP1 subfamily.</text>
</comment>
<comment type="sequence caution" evidence="18">
    <conflict type="erroneous initiation">
        <sequence resource="EMBL-CDS" id="BAD93056"/>
    </conflict>
    <text>Extended N-terminus.</text>
</comment>
<dbReference type="EC" id="3.1.3.62" evidence="12"/>
<dbReference type="EC" id="3.1.3.80" evidence="9"/>
<dbReference type="EMBL" id="AF084943">
    <property type="protein sequence ID" value="AAD09751.1"/>
    <property type="molecule type" value="mRNA"/>
</dbReference>
<dbReference type="EMBL" id="AF084944">
    <property type="protein sequence ID" value="AAD09752.1"/>
    <property type="molecule type" value="mRNA"/>
</dbReference>
<dbReference type="EMBL" id="AF046914">
    <property type="protein sequence ID" value="AAD02437.1"/>
    <property type="molecule type" value="mRNA"/>
</dbReference>
<dbReference type="EMBL" id="AL050356">
    <property type="protein sequence ID" value="CAB43673.1"/>
    <property type="molecule type" value="mRNA"/>
</dbReference>
<dbReference type="EMBL" id="AY358938">
    <property type="protein sequence ID" value="AAQ89297.1"/>
    <property type="molecule type" value="mRNA"/>
</dbReference>
<dbReference type="EMBL" id="AK309176">
    <property type="status" value="NOT_ANNOTATED_CDS"/>
    <property type="molecule type" value="mRNA"/>
</dbReference>
<dbReference type="EMBL" id="AB209819">
    <property type="protein sequence ID" value="BAD93056.1"/>
    <property type="status" value="ALT_INIT"/>
    <property type="molecule type" value="mRNA"/>
</dbReference>
<dbReference type="EMBL" id="AL138767">
    <property type="status" value="NOT_ANNOTATED_CDS"/>
    <property type="molecule type" value="Genomic_DNA"/>
</dbReference>
<dbReference type="EMBL" id="AL355334">
    <property type="status" value="NOT_ANNOTATED_CDS"/>
    <property type="molecule type" value="Genomic_DNA"/>
</dbReference>
<dbReference type="EMBL" id="BC032504">
    <property type="protein sequence ID" value="AAH32504.1"/>
    <property type="molecule type" value="mRNA"/>
</dbReference>
<dbReference type="CCDS" id="CCDS53551.1">
    <molecule id="Q9UNW1-2"/>
</dbReference>
<dbReference type="CCDS" id="CCDS53552.1">
    <molecule id="Q9UNW1-4"/>
</dbReference>
<dbReference type="CCDS" id="CCDS7384.1">
    <molecule id="Q9UNW1-1"/>
</dbReference>
<dbReference type="RefSeq" id="NP_001171588.1">
    <molecule id="Q9UNW1-2"/>
    <property type="nucleotide sequence ID" value="NM_001178117.2"/>
</dbReference>
<dbReference type="RefSeq" id="NP_001171589.1">
    <molecule id="Q9UNW1-4"/>
    <property type="nucleotide sequence ID" value="NM_001178118.2"/>
</dbReference>
<dbReference type="RefSeq" id="NP_004888.2">
    <molecule id="Q9UNW1-1"/>
    <property type="nucleotide sequence ID" value="NM_004897.4"/>
</dbReference>
<dbReference type="RefSeq" id="XP_011538681.1">
    <molecule id="Q9UNW1-4"/>
    <property type="nucleotide sequence ID" value="XM_011540379.4"/>
</dbReference>
<dbReference type="RefSeq" id="XP_016872455.1">
    <property type="nucleotide sequence ID" value="XM_017016966.1"/>
</dbReference>
<dbReference type="RefSeq" id="XP_054223198.1">
    <molecule id="Q9UNW1-4"/>
    <property type="nucleotide sequence ID" value="XM_054367223.1"/>
</dbReference>
<dbReference type="SMR" id="Q9UNW1"/>
<dbReference type="BioGRID" id="114932">
    <property type="interactions" value="60"/>
</dbReference>
<dbReference type="FunCoup" id="Q9UNW1">
    <property type="interactions" value="1615"/>
</dbReference>
<dbReference type="IntAct" id="Q9UNW1">
    <property type="interactions" value="27"/>
</dbReference>
<dbReference type="STRING" id="9606.ENSP00000361064"/>
<dbReference type="DEPOD" id="MINPP1"/>
<dbReference type="GlyConnect" id="1525">
    <property type="glycosylation" value="2 N-Linked glycans (1 site)"/>
</dbReference>
<dbReference type="GlyCosmos" id="Q9UNW1">
    <property type="glycosylation" value="3 sites, 3 glycans"/>
</dbReference>
<dbReference type="GlyGen" id="Q9UNW1">
    <property type="glycosylation" value="6 sites, 12 N-linked glycans (2 sites), 3 O-linked glycans (4 sites)"/>
</dbReference>
<dbReference type="iPTMnet" id="Q9UNW1"/>
<dbReference type="PhosphoSitePlus" id="Q9UNW1"/>
<dbReference type="BioMuta" id="MINPP1"/>
<dbReference type="DMDM" id="68565617"/>
<dbReference type="CPTAC" id="CPTAC-1313"/>
<dbReference type="jPOST" id="Q9UNW1"/>
<dbReference type="MassIVE" id="Q9UNW1"/>
<dbReference type="PaxDb" id="9606-ENSP00000361064"/>
<dbReference type="PeptideAtlas" id="Q9UNW1"/>
<dbReference type="ProteomicsDB" id="27109"/>
<dbReference type="ProteomicsDB" id="85333">
    <molecule id="Q9UNW1-1"/>
</dbReference>
<dbReference type="ProteomicsDB" id="85334">
    <molecule id="Q9UNW1-2"/>
</dbReference>
<dbReference type="ProteomicsDB" id="85335">
    <molecule id="Q9UNW1-3"/>
</dbReference>
<dbReference type="Pumba" id="Q9UNW1"/>
<dbReference type="Antibodypedia" id="16040">
    <property type="antibodies" value="315 antibodies from 31 providers"/>
</dbReference>
<dbReference type="CPTC" id="Q9UNW1">
    <property type="antibodies" value="2 antibodies"/>
</dbReference>
<dbReference type="DNASU" id="9562"/>
<dbReference type="Ensembl" id="ENST00000371994.8">
    <molecule id="Q9UNW1-2"/>
    <property type="protein sequence ID" value="ENSP00000361062.4"/>
    <property type="gene ID" value="ENSG00000107789.16"/>
</dbReference>
<dbReference type="Ensembl" id="ENST00000371996.9">
    <molecule id="Q9UNW1-1"/>
    <property type="protein sequence ID" value="ENSP00000361064.4"/>
    <property type="gene ID" value="ENSG00000107789.16"/>
</dbReference>
<dbReference type="Ensembl" id="ENST00000536010.1">
    <molecule id="Q9UNW1-4"/>
    <property type="protein sequence ID" value="ENSP00000437823.1"/>
    <property type="gene ID" value="ENSG00000107789.16"/>
</dbReference>
<dbReference type="GeneID" id="9562"/>
<dbReference type="KEGG" id="hsa:9562"/>
<dbReference type="MANE-Select" id="ENST00000371996.9">
    <property type="protein sequence ID" value="ENSP00000361064.4"/>
    <property type="RefSeq nucleotide sequence ID" value="NM_004897.5"/>
    <property type="RefSeq protein sequence ID" value="NP_004888.2"/>
</dbReference>
<dbReference type="UCSC" id="uc001keu.4">
    <molecule id="Q9UNW1-1"/>
    <property type="organism name" value="human"/>
</dbReference>
<dbReference type="AGR" id="HGNC:7102"/>
<dbReference type="CTD" id="9562"/>
<dbReference type="DisGeNET" id="9562"/>
<dbReference type="GeneCards" id="MINPP1"/>
<dbReference type="HGNC" id="HGNC:7102">
    <property type="gene designation" value="MINPP1"/>
</dbReference>
<dbReference type="HPA" id="ENSG00000107789">
    <property type="expression patterns" value="Low tissue specificity"/>
</dbReference>
<dbReference type="MalaCards" id="MINPP1"/>
<dbReference type="MIM" id="188470">
    <property type="type" value="phenotype"/>
</dbReference>
<dbReference type="MIM" id="605391">
    <property type="type" value="gene"/>
</dbReference>
<dbReference type="MIM" id="619527">
    <property type="type" value="phenotype"/>
</dbReference>
<dbReference type="neXtProt" id="NX_Q9UNW1"/>
<dbReference type="OpenTargets" id="ENSG00000107789"/>
<dbReference type="Orphanet" id="319487">
    <property type="disease" value="Familial papillary or follicular thyroid carcinoma"/>
</dbReference>
<dbReference type="Orphanet" id="284339">
    <property type="disease" value="Pontocerebellar hypoplasia type 7"/>
</dbReference>
<dbReference type="PharmGKB" id="PA30820"/>
<dbReference type="VEuPathDB" id="HostDB:ENSG00000107789"/>
<dbReference type="eggNOG" id="KOG1382">
    <property type="taxonomic scope" value="Eukaryota"/>
</dbReference>
<dbReference type="GeneTree" id="ENSGT00390000018409"/>
<dbReference type="HOGENOM" id="CLU_029165_3_1_1"/>
<dbReference type="InParanoid" id="Q9UNW1"/>
<dbReference type="OMA" id="ANSPWFA"/>
<dbReference type="OrthoDB" id="6509975at2759"/>
<dbReference type="PAN-GO" id="Q9UNW1">
    <property type="GO annotations" value="2 GO annotations based on evolutionary models"/>
</dbReference>
<dbReference type="PhylomeDB" id="Q9UNW1"/>
<dbReference type="TreeFam" id="TF324072"/>
<dbReference type="BioCyc" id="MetaCyc:HS03025-MONOMER"/>
<dbReference type="BRENDA" id="3.1.3.62">
    <property type="organism ID" value="2681"/>
</dbReference>
<dbReference type="PathwayCommons" id="Q9UNW1"/>
<dbReference type="Reactome" id="R-HSA-1855231">
    <property type="pathway name" value="Synthesis of IPs in the ER lumen"/>
</dbReference>
<dbReference type="SABIO-RK" id="Q9UNW1"/>
<dbReference type="SignaLink" id="Q9UNW1"/>
<dbReference type="BioGRID-ORCS" id="9562">
    <property type="hits" value="14 hits in 1178 CRISPR screens"/>
</dbReference>
<dbReference type="ChiTaRS" id="MINPP1">
    <property type="organism name" value="human"/>
</dbReference>
<dbReference type="GeneWiki" id="MINPP1"/>
<dbReference type="GenomeRNAi" id="9562"/>
<dbReference type="Pharos" id="Q9UNW1">
    <property type="development level" value="Tbio"/>
</dbReference>
<dbReference type="PRO" id="PR:Q9UNW1"/>
<dbReference type="Proteomes" id="UP000005640">
    <property type="component" value="Chromosome 10"/>
</dbReference>
<dbReference type="RNAct" id="Q9UNW1">
    <property type="molecule type" value="protein"/>
</dbReference>
<dbReference type="Bgee" id="ENSG00000107789">
    <property type="expression patterns" value="Expressed in trabecular bone tissue and 192 other cell types or tissues"/>
</dbReference>
<dbReference type="GO" id="GO:0005788">
    <property type="term" value="C:endoplasmic reticulum lumen"/>
    <property type="evidence" value="ECO:0000250"/>
    <property type="project" value="UniProtKB"/>
</dbReference>
<dbReference type="GO" id="GO:0070062">
    <property type="term" value="C:extracellular exosome"/>
    <property type="evidence" value="ECO:0007005"/>
    <property type="project" value="UniProtKB"/>
</dbReference>
<dbReference type="GO" id="GO:0005615">
    <property type="term" value="C:extracellular space"/>
    <property type="evidence" value="ECO:0000315"/>
    <property type="project" value="UniProtKB"/>
</dbReference>
<dbReference type="GO" id="GO:0005886">
    <property type="term" value="C:plasma membrane"/>
    <property type="evidence" value="ECO:0000250"/>
    <property type="project" value="UniProtKB"/>
</dbReference>
<dbReference type="GO" id="GO:0016158">
    <property type="term" value="F:3-phytase activity"/>
    <property type="evidence" value="ECO:0007669"/>
    <property type="project" value="RHEA"/>
</dbReference>
<dbReference type="GO" id="GO:0008707">
    <property type="term" value="F:4-phytase activity"/>
    <property type="evidence" value="ECO:0007669"/>
    <property type="project" value="RHEA"/>
</dbReference>
<dbReference type="GO" id="GO:0003993">
    <property type="term" value="F:acid phosphatase activity"/>
    <property type="evidence" value="ECO:0000318"/>
    <property type="project" value="GO_Central"/>
</dbReference>
<dbReference type="GO" id="GO:0034417">
    <property type="term" value="F:bisphosphoglycerate 3-phosphatase activity"/>
    <property type="evidence" value="ECO:0000314"/>
    <property type="project" value="BHF-UCL"/>
</dbReference>
<dbReference type="GO" id="GO:0016312">
    <property type="term" value="F:inositol bisphosphate phosphatase activity"/>
    <property type="evidence" value="ECO:0000314"/>
    <property type="project" value="UniProtKB"/>
</dbReference>
<dbReference type="GO" id="GO:0052826">
    <property type="term" value="F:inositol hexakisphosphate 2-phosphatase activity"/>
    <property type="evidence" value="ECO:0000304"/>
    <property type="project" value="Reactome"/>
</dbReference>
<dbReference type="GO" id="GO:0052827">
    <property type="term" value="F:inositol pentakisphosphate phosphatase activity"/>
    <property type="evidence" value="ECO:0000315"/>
    <property type="project" value="UniProtKB"/>
</dbReference>
<dbReference type="GO" id="GO:0052745">
    <property type="term" value="F:inositol phosphate phosphatase activity"/>
    <property type="evidence" value="ECO:0000318"/>
    <property type="project" value="GO_Central"/>
</dbReference>
<dbReference type="GO" id="GO:0046030">
    <property type="term" value="F:inositol trisphosphate phosphatase activity"/>
    <property type="evidence" value="ECO:0000314"/>
    <property type="project" value="UniProtKB"/>
</dbReference>
<dbReference type="GO" id="GO:0030351">
    <property type="term" value="F:inositol-1,3,4,5,6-pentakisphosphate 3-phosphatase activity"/>
    <property type="evidence" value="ECO:0000314"/>
    <property type="project" value="UniProtKB"/>
</dbReference>
<dbReference type="GO" id="GO:0051717">
    <property type="term" value="F:inositol-1,3,4,5-tetrakisphosphate 3-phosphatase activity"/>
    <property type="evidence" value="ECO:0000304"/>
    <property type="project" value="Reactome"/>
</dbReference>
<dbReference type="GO" id="GO:0030352">
    <property type="term" value="F:inositol-1,4,5,6-tetrakisphosphate 6-phosphatase activity"/>
    <property type="evidence" value="ECO:0000314"/>
    <property type="project" value="UniProtKB"/>
</dbReference>
<dbReference type="GO" id="GO:0004446">
    <property type="term" value="F:inositol-hexakisphosphate phosphatase activity"/>
    <property type="evidence" value="ECO:0000314"/>
    <property type="project" value="UniProtKB"/>
</dbReference>
<dbReference type="GO" id="GO:0030282">
    <property type="term" value="P:bone mineralization"/>
    <property type="evidence" value="ECO:0000303"/>
    <property type="project" value="UniProtKB"/>
</dbReference>
<dbReference type="GO" id="GO:0043647">
    <property type="term" value="P:inositol phosphate metabolic process"/>
    <property type="evidence" value="ECO:0000304"/>
    <property type="project" value="Reactome"/>
</dbReference>
<dbReference type="GO" id="GO:0030003">
    <property type="term" value="P:intracellular monoatomic cation homeostasis"/>
    <property type="evidence" value="ECO:0000315"/>
    <property type="project" value="UniProtKB"/>
</dbReference>
<dbReference type="GO" id="GO:0001503">
    <property type="term" value="P:ossification"/>
    <property type="evidence" value="ECO:0000303"/>
    <property type="project" value="UniProtKB"/>
</dbReference>
<dbReference type="CDD" id="cd07061">
    <property type="entry name" value="HP_HAP_like"/>
    <property type="match status" value="1"/>
</dbReference>
<dbReference type="FunFam" id="3.40.50.1240:FF:000014">
    <property type="entry name" value="Multiple inositol polyphosphate phosphatase 1"/>
    <property type="match status" value="1"/>
</dbReference>
<dbReference type="Gene3D" id="3.40.50.1240">
    <property type="entry name" value="Phosphoglycerate mutase-like"/>
    <property type="match status" value="1"/>
</dbReference>
<dbReference type="InterPro" id="IPR000560">
    <property type="entry name" value="His_Pase_clade-2"/>
</dbReference>
<dbReference type="InterPro" id="IPR029033">
    <property type="entry name" value="His_PPase_superfam"/>
</dbReference>
<dbReference type="InterPro" id="IPR016274">
    <property type="entry name" value="Histidine_acid_Pase_euk"/>
</dbReference>
<dbReference type="PANTHER" id="PTHR20963:SF8">
    <property type="entry name" value="MULTIPLE INOSITOL POLYPHOSPHATE PHOSPHATASE 1"/>
    <property type="match status" value="1"/>
</dbReference>
<dbReference type="PANTHER" id="PTHR20963">
    <property type="entry name" value="MULTIPLE INOSITOL POLYPHOSPHATE PHOSPHATASE-RELATED"/>
    <property type="match status" value="1"/>
</dbReference>
<dbReference type="Pfam" id="PF00328">
    <property type="entry name" value="His_Phos_2"/>
    <property type="match status" value="1"/>
</dbReference>
<dbReference type="PIRSF" id="PIRSF000894">
    <property type="entry name" value="Acid_phosphatase"/>
    <property type="match status" value="1"/>
</dbReference>
<dbReference type="SUPFAM" id="SSF53254">
    <property type="entry name" value="Phosphoglycerate mutase-like"/>
    <property type="match status" value="1"/>
</dbReference>
<dbReference type="PROSITE" id="PS00014">
    <property type="entry name" value="ER_TARGET"/>
    <property type="match status" value="1"/>
</dbReference>
<feature type="signal peptide" evidence="1">
    <location>
        <begin position="1"/>
        <end position="30"/>
    </location>
</feature>
<feature type="chain" id="PRO_0000019582" description="Multiple inositol polyphosphate phosphatase 1">
    <location>
        <begin position="31"/>
        <end position="487"/>
    </location>
</feature>
<feature type="short sequence motif" description="Prevents secretion from ER" evidence="5">
    <location>
        <begin position="484"/>
        <end position="487"/>
    </location>
</feature>
<feature type="active site" evidence="3">
    <location>
        <position position="89"/>
    </location>
</feature>
<feature type="glycosylation site" description="N-linked (GlcNAc...) asparagine" evidence="7">
    <location>
        <position position="242"/>
    </location>
</feature>
<feature type="glycosylation site" description="N-linked (GlcNAc...) asparagine" evidence="4">
    <location>
        <position position="481"/>
    </location>
</feature>
<feature type="splice variant" id="VSP_044569" description="In isoform 4." evidence="14">
    <original>MLRAPGCLLRTSVAPAAALAAALLSSLARCSLLEPRDPVASSLSPYFGTKTRYEDVNPVLLSGPEAPWRDPELLEGTCTPVQLVALIRHGTRYPTVKQIRKLRQLHGLLQARGSRDGGASSTGSRDLGAALADWPLWYADWMDGQLVEKGRQDMRQLALRLASLFPALFSRENYGRLRLITSSKHRCMDSSAAFLQGLWQHYHPGLPPPDVAD</original>
    <variation>MCLFQLCGLVRY</variation>
    <location>
        <begin position="1"/>
        <end position="213"/>
    </location>
</feature>
<feature type="splice variant" id="VSP_014552" description="In isoform 2." evidence="16">
    <original>DLIQVAFFTCSFDLAIKGVKSPWCDVFDIDDAKV</original>
    <variation>GLSQFLLQSSSSLVMQRLFFHCFLSWATSKTRNP</variation>
    <location>
        <begin position="279"/>
        <end position="312"/>
    </location>
</feature>
<feature type="splice variant" id="VSP_014553" description="In isoform 3." evidence="17">
    <original>DLIQVA</original>
    <variation>GIRIFK</variation>
    <location>
        <begin position="279"/>
        <end position="284"/>
    </location>
</feature>
<feature type="splice variant" id="VSP_014554" description="In isoform 3." evidence="17">
    <location>
        <begin position="285"/>
        <end position="487"/>
    </location>
</feature>
<feature type="splice variant" id="VSP_014555" description="In isoform 2." evidence="16">
    <location>
        <begin position="313"/>
        <end position="487"/>
    </location>
</feature>
<feature type="sequence variant" id="VAR_022836" description="In NMTC2; somatic mutation; dbSNP:rs119486096." evidence="6">
    <original>S</original>
    <variation>L</variation>
    <location>
        <position position="41"/>
    </location>
</feature>
<feature type="sequence variant" id="VAR_086289" description="In PCH16; loss of enzymatic activity; dbSNP:rs2131792567." evidence="11">
    <original>Y</original>
    <variation>D</variation>
    <location>
        <position position="53"/>
    </location>
</feature>
<feature type="sequence variant" id="VAR_086290" description="In PCH16; uncertain significance; dbSNP:rs1456945513." evidence="11">
    <original>F</original>
    <variation>L</variation>
    <location>
        <position position="228"/>
    </location>
</feature>
<feature type="sequence variant" id="VAR_022837" description="In NMTC2; dbSNP:rs104894171." evidence="6">
    <original>Q</original>
    <variation>R</variation>
    <location>
        <position position="270"/>
    </location>
</feature>
<feature type="sequence variant" id="VAR_086291" description="In PCH16; uncertain significance; dbSNP:rs748636033." evidence="10">
    <original>A</original>
    <variation>D</variation>
    <location>
        <position position="284"/>
    </location>
</feature>
<feature type="sequence variant" id="VAR_086292" description="In PCH16; uncertain significance; dbSNP:rs749643952." evidence="10">
    <original>I</original>
    <variation>S</variation>
    <location>
        <position position="331"/>
    </location>
</feature>
<feature type="sequence variant" id="VAR_086293" description="In PCH16; uncertain significance; dbSNP:rs1381093602." evidence="11">
    <original>R</original>
    <variation>Q</variation>
    <location>
        <position position="401"/>
    </location>
</feature>
<feature type="sequence variant" id="VAR_086294" description="In PCH16; uncertain significance." evidence="10">
    <location>
        <begin position="404"/>
        <end position="487"/>
    </location>
</feature>
<feature type="sequence variant" id="VAR_086295" description="In PCH16; uncertain significance; contary to wild-type, does not rescue normal growth in a MINPP1 knockout cell line; dbSNP:rs2131848604." evidence="11">
    <original>E</original>
    <variation>K</variation>
    <location>
        <position position="486"/>
    </location>
</feature>
<feature type="mutagenesis site" description="Strong reduction of 2,3-bisphosphoglycerate 3-phosphatase activity." evidence="9">
    <original>H</original>
    <variation>A</variation>
    <location>
        <position position="89"/>
    </location>
</feature>
<feature type="mutagenesis site" description="Greatly diminishes phosphatase activity." evidence="13">
    <original>H</original>
    <variation>A</variation>
    <location>
        <position position="370"/>
    </location>
</feature>
<feature type="sequence conflict" description="In Ref. 3; CAB43673." evidence="18" ref="3">
    <original>V</original>
    <variation>A</variation>
    <location>
        <position position="81"/>
    </location>
</feature>
<feature type="sequence conflict" description="In Ref. 2; AAD02437." evidence="18" ref="2">
    <original>A</original>
    <variation>P</variation>
    <location>
        <position position="111"/>
    </location>
</feature>
<feature type="sequence conflict" description="In Ref. 2; AAD02437." evidence="18" ref="2">
    <original>A</original>
    <variation>R</variation>
    <location>
        <position position="132"/>
    </location>
</feature>
<feature type="sequence conflict" description="In Ref. 2; AAD02437." evidence="18" ref="2">
    <original>QL</original>
    <variation>HV</variation>
    <location>
        <begin position="156"/>
        <end position="157"/>
    </location>
</feature>
<feature type="sequence conflict" description="In Ref. 3; CAB43673." evidence="18" ref="3">
    <original>F</original>
    <variation>S</variation>
    <location>
        <position position="344"/>
    </location>
</feature>
<reference key="1">
    <citation type="journal article" date="1999" name="FEBS Lett.">
        <title>The human and rat forms of multiple inositol polyphosphate phosphatase: functional homology with a histidine acid phosphatase up-regulated during endochondral ossification.</title>
        <authorList>
            <person name="Caffrey J.J."/>
            <person name="Hidaka K."/>
            <person name="Matsuda M."/>
            <person name="Hirata M."/>
            <person name="Shears S.B."/>
        </authorList>
    </citation>
    <scope>NUCLEOTIDE SEQUENCE [MRNA] (ISOFORMS 1 AND 2)</scope>
    <scope>TISSUE SPECIFICITY</scope>
    <scope>MUTAGENESIS OF HIS-370</scope>
</reference>
<reference key="2">
    <citation type="journal article" date="1999" name="Genomics">
        <title>Multiple inositol polyphosphate phosphatase: evolution as a distinct group within the histidine phosphatase family and chromosomal localization of the human and mouse genes to chromosomes 10q23 and 19.</title>
        <authorList>
            <person name="Chi H."/>
            <person name="Tiller G.E."/>
            <person name="Dasouki M.J."/>
            <person name="Romano P.R."/>
            <person name="Wang J."/>
            <person name="O'keefe R.J."/>
            <person name="Puzas J.E."/>
            <person name="Rosier R.N."/>
            <person name="Reynolds P.R."/>
        </authorList>
    </citation>
    <scope>NUCLEOTIDE SEQUENCE [MRNA] (ISOFORM 1)</scope>
</reference>
<reference key="3">
    <citation type="journal article" date="2001" name="Genome Res.">
        <title>Towards a catalog of human genes and proteins: sequencing and analysis of 500 novel complete protein coding human cDNAs.</title>
        <authorList>
            <person name="Wiemann S."/>
            <person name="Weil B."/>
            <person name="Wellenreuther R."/>
            <person name="Gassenhuber J."/>
            <person name="Glassl S."/>
            <person name="Ansorge W."/>
            <person name="Boecher M."/>
            <person name="Bloecker H."/>
            <person name="Bauersachs S."/>
            <person name="Blum H."/>
            <person name="Lauber J."/>
            <person name="Duesterhoeft A."/>
            <person name="Beyer A."/>
            <person name="Koehrer K."/>
            <person name="Strack N."/>
            <person name="Mewes H.-W."/>
            <person name="Ottenwaelder B."/>
            <person name="Obermaier B."/>
            <person name="Tampe J."/>
            <person name="Heubner D."/>
            <person name="Wambutt R."/>
            <person name="Korn B."/>
            <person name="Klein M."/>
            <person name="Poustka A."/>
        </authorList>
    </citation>
    <scope>NUCLEOTIDE SEQUENCE [LARGE SCALE MRNA] (ISOFORM 1)</scope>
    <source>
        <tissue>Brain</tissue>
    </source>
</reference>
<reference key="4">
    <citation type="journal article" date="2003" name="Genome Res.">
        <title>The secreted protein discovery initiative (SPDI), a large-scale effort to identify novel human secreted and transmembrane proteins: a bioinformatics assessment.</title>
        <authorList>
            <person name="Clark H.F."/>
            <person name="Gurney A.L."/>
            <person name="Abaya E."/>
            <person name="Baker K."/>
            <person name="Baldwin D.T."/>
            <person name="Brush J."/>
            <person name="Chen J."/>
            <person name="Chow B."/>
            <person name="Chui C."/>
            <person name="Crowley C."/>
            <person name="Currell B."/>
            <person name="Deuel B."/>
            <person name="Dowd P."/>
            <person name="Eaton D."/>
            <person name="Foster J.S."/>
            <person name="Grimaldi C."/>
            <person name="Gu Q."/>
            <person name="Hass P.E."/>
            <person name="Heldens S."/>
            <person name="Huang A."/>
            <person name="Kim H.S."/>
            <person name="Klimowski L."/>
            <person name="Jin Y."/>
            <person name="Johnson S."/>
            <person name="Lee J."/>
            <person name="Lewis L."/>
            <person name="Liao D."/>
            <person name="Mark M.R."/>
            <person name="Robbie E."/>
            <person name="Sanchez C."/>
            <person name="Schoenfeld J."/>
            <person name="Seshagiri S."/>
            <person name="Simmons L."/>
            <person name="Singh J."/>
            <person name="Smith V."/>
            <person name="Stinson J."/>
            <person name="Vagts A."/>
            <person name="Vandlen R.L."/>
            <person name="Watanabe C."/>
            <person name="Wieand D."/>
            <person name="Woods K."/>
            <person name="Xie M.-H."/>
            <person name="Yansura D.G."/>
            <person name="Yi S."/>
            <person name="Yu G."/>
            <person name="Yuan J."/>
            <person name="Zhang M."/>
            <person name="Zhang Z."/>
            <person name="Goddard A.D."/>
            <person name="Wood W.I."/>
            <person name="Godowski P.J."/>
            <person name="Gray A.M."/>
        </authorList>
    </citation>
    <scope>NUCLEOTIDE SEQUENCE [LARGE SCALE MRNA] (ISOFORM 1)</scope>
</reference>
<reference key="5">
    <citation type="journal article" date="2004" name="Nat. Genet.">
        <title>Complete sequencing and characterization of 21,243 full-length human cDNAs.</title>
        <authorList>
            <person name="Ota T."/>
            <person name="Suzuki Y."/>
            <person name="Nishikawa T."/>
            <person name="Otsuki T."/>
            <person name="Sugiyama T."/>
            <person name="Irie R."/>
            <person name="Wakamatsu A."/>
            <person name="Hayashi K."/>
            <person name="Sato H."/>
            <person name="Nagai K."/>
            <person name="Kimura K."/>
            <person name="Makita H."/>
            <person name="Sekine M."/>
            <person name="Obayashi M."/>
            <person name="Nishi T."/>
            <person name="Shibahara T."/>
            <person name="Tanaka T."/>
            <person name="Ishii S."/>
            <person name="Yamamoto J."/>
            <person name="Saito K."/>
            <person name="Kawai Y."/>
            <person name="Isono Y."/>
            <person name="Nakamura Y."/>
            <person name="Nagahari K."/>
            <person name="Murakami K."/>
            <person name="Yasuda T."/>
            <person name="Iwayanagi T."/>
            <person name="Wagatsuma M."/>
            <person name="Shiratori A."/>
            <person name="Sudo H."/>
            <person name="Hosoiri T."/>
            <person name="Kaku Y."/>
            <person name="Kodaira H."/>
            <person name="Kondo H."/>
            <person name="Sugawara M."/>
            <person name="Takahashi M."/>
            <person name="Kanda K."/>
            <person name="Yokoi T."/>
            <person name="Furuya T."/>
            <person name="Kikkawa E."/>
            <person name="Omura Y."/>
            <person name="Abe K."/>
            <person name="Kamihara K."/>
            <person name="Katsuta N."/>
            <person name="Sato K."/>
            <person name="Tanikawa M."/>
            <person name="Yamazaki M."/>
            <person name="Ninomiya K."/>
            <person name="Ishibashi T."/>
            <person name="Yamashita H."/>
            <person name="Murakawa K."/>
            <person name="Fujimori K."/>
            <person name="Tanai H."/>
            <person name="Kimata M."/>
            <person name="Watanabe M."/>
            <person name="Hiraoka S."/>
            <person name="Chiba Y."/>
            <person name="Ishida S."/>
            <person name="Ono Y."/>
            <person name="Takiguchi S."/>
            <person name="Watanabe S."/>
            <person name="Yosida M."/>
            <person name="Hotuta T."/>
            <person name="Kusano J."/>
            <person name="Kanehori K."/>
            <person name="Takahashi-Fujii A."/>
            <person name="Hara H."/>
            <person name="Tanase T.-O."/>
            <person name="Nomura Y."/>
            <person name="Togiya S."/>
            <person name="Komai F."/>
            <person name="Hara R."/>
            <person name="Takeuchi K."/>
            <person name="Arita M."/>
            <person name="Imose N."/>
            <person name="Musashino K."/>
            <person name="Yuuki H."/>
            <person name="Oshima A."/>
            <person name="Sasaki N."/>
            <person name="Aotsuka S."/>
            <person name="Yoshikawa Y."/>
            <person name="Matsunawa H."/>
            <person name="Ichihara T."/>
            <person name="Shiohata N."/>
            <person name="Sano S."/>
            <person name="Moriya S."/>
            <person name="Momiyama H."/>
            <person name="Satoh N."/>
            <person name="Takami S."/>
            <person name="Terashima Y."/>
            <person name="Suzuki O."/>
            <person name="Nakagawa S."/>
            <person name="Senoh A."/>
            <person name="Mizoguchi H."/>
            <person name="Goto Y."/>
            <person name="Shimizu F."/>
            <person name="Wakebe H."/>
            <person name="Hishigaki H."/>
            <person name="Watanabe T."/>
            <person name="Sugiyama A."/>
            <person name="Takemoto M."/>
            <person name="Kawakami B."/>
            <person name="Yamazaki M."/>
            <person name="Watanabe K."/>
            <person name="Kumagai A."/>
            <person name="Itakura S."/>
            <person name="Fukuzumi Y."/>
            <person name="Fujimori Y."/>
            <person name="Komiyama M."/>
            <person name="Tashiro H."/>
            <person name="Tanigami A."/>
            <person name="Fujiwara T."/>
            <person name="Ono T."/>
            <person name="Yamada K."/>
            <person name="Fujii Y."/>
            <person name="Ozaki K."/>
            <person name="Hirao M."/>
            <person name="Ohmori Y."/>
            <person name="Kawabata A."/>
            <person name="Hikiji T."/>
            <person name="Kobatake N."/>
            <person name="Inagaki H."/>
            <person name="Ikema Y."/>
            <person name="Okamoto S."/>
            <person name="Okitani R."/>
            <person name="Kawakami T."/>
            <person name="Noguchi S."/>
            <person name="Itoh T."/>
            <person name="Shigeta K."/>
            <person name="Senba T."/>
            <person name="Matsumura K."/>
            <person name="Nakajima Y."/>
            <person name="Mizuno T."/>
            <person name="Morinaga M."/>
            <person name="Sasaki M."/>
            <person name="Togashi T."/>
            <person name="Oyama M."/>
            <person name="Hata H."/>
            <person name="Watanabe M."/>
            <person name="Komatsu T."/>
            <person name="Mizushima-Sugano J."/>
            <person name="Satoh T."/>
            <person name="Shirai Y."/>
            <person name="Takahashi Y."/>
            <person name="Nakagawa K."/>
            <person name="Okumura K."/>
            <person name="Nagase T."/>
            <person name="Nomura N."/>
            <person name="Kikuchi H."/>
            <person name="Masuho Y."/>
            <person name="Yamashita R."/>
            <person name="Nakai K."/>
            <person name="Yada T."/>
            <person name="Nakamura Y."/>
            <person name="Ohara O."/>
            <person name="Isogai T."/>
            <person name="Sugano S."/>
        </authorList>
    </citation>
    <scope>NUCLEOTIDE SEQUENCE [LARGE SCALE MRNA] (ISOFORM 4)</scope>
    <source>
        <tissue>Thalamus</tissue>
    </source>
</reference>
<reference key="6">
    <citation type="submission" date="2005-03" db="EMBL/GenBank/DDBJ databases">
        <authorList>
            <person name="Totoki Y."/>
            <person name="Toyoda A."/>
            <person name="Takeda T."/>
            <person name="Sakaki Y."/>
            <person name="Tanaka A."/>
            <person name="Yokoyama S."/>
            <person name="Ohara O."/>
            <person name="Nagase T."/>
            <person name="Kikuno R.F."/>
        </authorList>
    </citation>
    <scope>NUCLEOTIDE SEQUENCE [LARGE SCALE MRNA] (ISOFORM 3)</scope>
    <source>
        <tissue>Brain</tissue>
    </source>
</reference>
<reference key="7">
    <citation type="journal article" date="2004" name="Nature">
        <title>The DNA sequence and comparative analysis of human chromosome 10.</title>
        <authorList>
            <person name="Deloukas P."/>
            <person name="Earthrowl M.E."/>
            <person name="Grafham D.V."/>
            <person name="Rubenfield M."/>
            <person name="French L."/>
            <person name="Steward C.A."/>
            <person name="Sims S.K."/>
            <person name="Jones M.C."/>
            <person name="Searle S."/>
            <person name="Scott C."/>
            <person name="Howe K."/>
            <person name="Hunt S.E."/>
            <person name="Andrews T.D."/>
            <person name="Gilbert J.G.R."/>
            <person name="Swarbreck D."/>
            <person name="Ashurst J.L."/>
            <person name="Taylor A."/>
            <person name="Battles J."/>
            <person name="Bird C.P."/>
            <person name="Ainscough R."/>
            <person name="Almeida J.P."/>
            <person name="Ashwell R.I.S."/>
            <person name="Ambrose K.D."/>
            <person name="Babbage A.K."/>
            <person name="Bagguley C.L."/>
            <person name="Bailey J."/>
            <person name="Banerjee R."/>
            <person name="Bates K."/>
            <person name="Beasley H."/>
            <person name="Bray-Allen S."/>
            <person name="Brown A.J."/>
            <person name="Brown J.Y."/>
            <person name="Burford D.C."/>
            <person name="Burrill W."/>
            <person name="Burton J."/>
            <person name="Cahill P."/>
            <person name="Camire D."/>
            <person name="Carter N.P."/>
            <person name="Chapman J.C."/>
            <person name="Clark S.Y."/>
            <person name="Clarke G."/>
            <person name="Clee C.M."/>
            <person name="Clegg S."/>
            <person name="Corby N."/>
            <person name="Coulson A."/>
            <person name="Dhami P."/>
            <person name="Dutta I."/>
            <person name="Dunn M."/>
            <person name="Faulkner L."/>
            <person name="Frankish A."/>
            <person name="Frankland J.A."/>
            <person name="Garner P."/>
            <person name="Garnett J."/>
            <person name="Gribble S."/>
            <person name="Griffiths C."/>
            <person name="Grocock R."/>
            <person name="Gustafson E."/>
            <person name="Hammond S."/>
            <person name="Harley J.L."/>
            <person name="Hart E."/>
            <person name="Heath P.D."/>
            <person name="Ho T.P."/>
            <person name="Hopkins B."/>
            <person name="Horne J."/>
            <person name="Howden P.J."/>
            <person name="Huckle E."/>
            <person name="Hynds C."/>
            <person name="Johnson C."/>
            <person name="Johnson D."/>
            <person name="Kana A."/>
            <person name="Kay M."/>
            <person name="Kimberley A.M."/>
            <person name="Kershaw J.K."/>
            <person name="Kokkinaki M."/>
            <person name="Laird G.K."/>
            <person name="Lawlor S."/>
            <person name="Lee H.M."/>
            <person name="Leongamornlert D.A."/>
            <person name="Laird G."/>
            <person name="Lloyd C."/>
            <person name="Lloyd D.M."/>
            <person name="Loveland J."/>
            <person name="Lovell J."/>
            <person name="McLaren S."/>
            <person name="McLay K.E."/>
            <person name="McMurray A."/>
            <person name="Mashreghi-Mohammadi M."/>
            <person name="Matthews L."/>
            <person name="Milne S."/>
            <person name="Nickerson T."/>
            <person name="Nguyen M."/>
            <person name="Overton-Larty E."/>
            <person name="Palmer S.A."/>
            <person name="Pearce A.V."/>
            <person name="Peck A.I."/>
            <person name="Pelan S."/>
            <person name="Phillimore B."/>
            <person name="Porter K."/>
            <person name="Rice C.M."/>
            <person name="Rogosin A."/>
            <person name="Ross M.T."/>
            <person name="Sarafidou T."/>
            <person name="Sehra H.K."/>
            <person name="Shownkeen R."/>
            <person name="Skuce C.D."/>
            <person name="Smith M."/>
            <person name="Standring L."/>
            <person name="Sycamore N."/>
            <person name="Tester J."/>
            <person name="Thorpe A."/>
            <person name="Torcasso W."/>
            <person name="Tracey A."/>
            <person name="Tromans A."/>
            <person name="Tsolas J."/>
            <person name="Wall M."/>
            <person name="Walsh J."/>
            <person name="Wang H."/>
            <person name="Weinstock K."/>
            <person name="West A.P."/>
            <person name="Willey D.L."/>
            <person name="Whitehead S.L."/>
            <person name="Wilming L."/>
            <person name="Wray P.W."/>
            <person name="Young L."/>
            <person name="Chen Y."/>
            <person name="Lovering R.C."/>
            <person name="Moschonas N.K."/>
            <person name="Siebert R."/>
            <person name="Fechtel K."/>
            <person name="Bentley D."/>
            <person name="Durbin R.M."/>
            <person name="Hubbard T."/>
            <person name="Doucette-Stamm L."/>
            <person name="Beck S."/>
            <person name="Smith D.R."/>
            <person name="Rogers J."/>
        </authorList>
    </citation>
    <scope>NUCLEOTIDE SEQUENCE [LARGE SCALE GENOMIC DNA]</scope>
</reference>
<reference key="8">
    <citation type="journal article" date="2004" name="Genome Res.">
        <title>The status, quality, and expansion of the NIH full-length cDNA project: the Mammalian Gene Collection (MGC).</title>
        <authorList>
            <consortium name="The MGC Project Team"/>
        </authorList>
    </citation>
    <scope>NUCLEOTIDE SEQUENCE [LARGE SCALE MRNA] (ISOFORM 1)</scope>
    <source>
        <tissue>Brain</tissue>
    </source>
</reference>
<reference key="9">
    <citation type="journal article" date="2005" name="J. Proteome Res.">
        <title>Human plasma N-glycoproteome analysis by immunoaffinity subtraction, hydrazide chemistry, and mass spectrometry.</title>
        <authorList>
            <person name="Liu T."/>
            <person name="Qian W.-J."/>
            <person name="Gritsenko M.A."/>
            <person name="Camp D.G. II"/>
            <person name="Monroe M.E."/>
            <person name="Moore R.J."/>
            <person name="Smith R.D."/>
        </authorList>
    </citation>
    <scope>GLYCOSYLATION [LARGE SCALE ANALYSIS] AT ASN-242</scope>
    <source>
        <tissue>Plasma</tissue>
    </source>
</reference>
<reference key="10">
    <citation type="journal article" date="2006" name="J. Biotechnol.">
        <title>Avian multiple inositol polyphosphate phosphatase is an active phytase that can be engineered to help ameliorate the planet's 'phosphate crisis'.</title>
        <authorList>
            <person name="Cho J."/>
            <person name="Choi K."/>
            <person name="Darden T."/>
            <person name="Reynolds P.R."/>
            <person name="Petitte J.N."/>
            <person name="Shears S.B."/>
        </authorList>
    </citation>
    <scope>CATALYTIC ACTIVITY</scope>
    <scope>BIOPHYSICOCHEMICAL PROPERTIES</scope>
</reference>
<reference key="11">
    <citation type="journal article" date="2008" name="Proc. Natl. Acad. Sci. U.S.A.">
        <title>Dephosphorylation of 2,3-bisphosphoglycerate by MIPP expands the regulatory capacity of the Rapoport-Luebering glycolytic shunt.</title>
        <authorList>
            <person name="Cho J."/>
            <person name="King J.S."/>
            <person name="Qian X."/>
            <person name="Harwood A.J."/>
            <person name="Shears S.B."/>
        </authorList>
    </citation>
    <scope>FUNCTION AS 2,3-BISPHOSPHOGLYCERATE 3-PHOSPHATASE</scope>
    <scope>CATALYTIC ACTIVITY</scope>
    <scope>BIOPHYSICOCHEMICAL PROPERTIES</scope>
    <scope>MUTAGENESIS OF HIS-89</scope>
</reference>
<reference key="12">
    <citation type="journal article" date="2011" name="BMC Syst. Biol.">
        <title>Initial characterization of the human central proteome.</title>
        <authorList>
            <person name="Burkard T.R."/>
            <person name="Planyavsky M."/>
            <person name="Kaupe I."/>
            <person name="Breitwieser F.P."/>
            <person name="Buerckstuemmer T."/>
            <person name="Bennett K.L."/>
            <person name="Superti-Furga G."/>
            <person name="Colinge J."/>
        </authorList>
    </citation>
    <scope>IDENTIFICATION BY MASS SPECTROMETRY [LARGE SCALE ANALYSIS]</scope>
</reference>
<reference key="13">
    <citation type="journal article" date="2015" name="Proteomics">
        <title>N-terminome analysis of the human mitochondrial proteome.</title>
        <authorList>
            <person name="Vaca Jacome A.S."/>
            <person name="Rabilloud T."/>
            <person name="Schaeffer-Reiss C."/>
            <person name="Rompais M."/>
            <person name="Ayoub D."/>
            <person name="Lane L."/>
            <person name="Bairoch A."/>
            <person name="Van Dorsselaer A."/>
            <person name="Carapito C."/>
        </authorList>
    </citation>
    <scope>IDENTIFICATION BY MASS SPECTROMETRY [LARGE SCALE ANALYSIS]</scope>
</reference>
<reference key="14">
    <citation type="journal article" date="2022" name="ACS Cent. Sci.">
        <title>Stable Isotopomers of myo-Inositol Uncover a Complex MINPP1-Dependent Inositol Phosphate Network.</title>
        <authorList>
            <person name="Nguyen Trung M."/>
            <person name="Kieninger S."/>
            <person name="Fandi Z."/>
            <person name="Qiu D."/>
            <person name="Liu G."/>
            <person name="Mehendale N.K."/>
            <person name="Saiardi A."/>
            <person name="Jessen H."/>
            <person name="Keller B."/>
            <person name="Fiedler D."/>
        </authorList>
    </citation>
    <scope>FUNCTION</scope>
    <scope>CATALYTIC ACTIVITY</scope>
</reference>
<reference key="15">
    <citation type="journal article" date="2001" name="J. Clin. Endocrinol. Metab.">
        <title>Somatic mutation and germline variants of MINPP1, a phosphatase gene located in proximity to PTEN on 10q23.3, in follicular thyroid carcinomas.</title>
        <authorList>
            <person name="Gimm O."/>
            <person name="Chi H."/>
            <person name="Dahia P.L."/>
            <person name="Perren A."/>
            <person name="Hinze R."/>
            <person name="Komminoth P."/>
            <person name="Dralle H."/>
            <person name="Reynolds P.R."/>
            <person name="Eng C."/>
        </authorList>
    </citation>
    <scope>INVOLVEMENT IN NMTC2</scope>
    <scope>VARIANTS NMTC2 LEU-41 AND ARG-270</scope>
</reference>
<reference key="16">
    <citation type="journal article" date="2020" name="Nat. Commun.">
        <title>MINPP1 prevents intracellular accumulation of the chelator inositol hexakisphosphate and is mutated in Pontocerebellar Hypoplasia.</title>
        <authorList>
            <person name="Ucuncu E."/>
            <person name="Rajamani K."/>
            <person name="Wilson M.S.C."/>
            <person name="Medina-Cano D."/>
            <person name="Altin N."/>
            <person name="David P."/>
            <person name="Barcia G."/>
            <person name="Lefort N."/>
            <person name="Banal C."/>
            <person name="Vasilache-Dangles M.T."/>
            <person name="Pitelet G."/>
            <person name="Lorino E."/>
            <person name="Rabasse N."/>
            <person name="Bieth E."/>
            <person name="Zaki M.S."/>
            <person name="Topcu M."/>
            <person name="Sonmez F.M."/>
            <person name="Musaev D."/>
            <person name="Stanley V."/>
            <person name="Bole-Feysot C."/>
            <person name="Nitschke P."/>
            <person name="Munnich A."/>
            <person name="Bahi-Buisson N."/>
            <person name="Fossoud C."/>
            <person name="Giuliano F."/>
            <person name="Colleaux L."/>
            <person name="Burglen L."/>
            <person name="Gleeson J.G."/>
            <person name="Boddaert N."/>
            <person name="Saiardi A."/>
            <person name="Cantagrel V."/>
        </authorList>
    </citation>
    <scope>INVOLVEMENT IN PCH16</scope>
    <scope>VARIANTS PCH16 ASP-53; LEU-228; GLN-401 AND LYS-486</scope>
    <scope>CHARACTERIZATION OF VARIANTS PCH16 ASP-53 AND LYS-486</scope>
    <scope>FUNCTION</scope>
    <scope>CATALYTIC ACTIVITY</scope>
    <scope>SUBCELLULAR LOCATION</scope>
    <scope>TISSUE SPECIFICITY</scope>
    <scope>GLYCOSYLATION</scope>
</reference>
<reference key="17">
    <citation type="journal article" date="2021" name="Eur. J. Hum. Genet.">
        <title>Pontocerebellar hypoplasia due to bi-allelic variants in MINPP1.</title>
        <authorList>
            <person name="Appelhof B."/>
            <person name="Wagner M."/>
            <person name="Hoefele J."/>
            <person name="Heinze A."/>
            <person name="Roser T."/>
            <person name="Koch-Hogrebe M."/>
            <person name="Roosendaal S.D."/>
            <person name="Dehghani M."/>
            <person name="Mehrjardi M.Y.V."/>
            <person name="Torti E."/>
            <person name="Houlden H."/>
            <person name="Maroofian R."/>
            <person name="Rajabi F."/>
            <person name="Sticht H."/>
            <person name="Baas F."/>
            <person name="Wieczorek D."/>
            <person name="Jamra R.A."/>
        </authorList>
    </citation>
    <scope>INVOLVEMENT IN PCH16</scope>
    <scope>VARIANTS PCH16 ASP-284; SER-331 AND 404-ARG--LEU-487 DEL</scope>
    <scope>TISSUE SPECIFICITY</scope>
</reference>
<name>MINP1_HUMAN</name>
<evidence type="ECO:0000250" key="1"/>
<evidence type="ECO:0000250" key="2">
    <source>
        <dbReference type="UniProtKB" id="O35217"/>
    </source>
</evidence>
<evidence type="ECO:0000250" key="3">
    <source>
        <dbReference type="UniProtKB" id="Q9Z2L6"/>
    </source>
</evidence>
<evidence type="ECO:0000255" key="4"/>
<evidence type="ECO:0000255" key="5">
    <source>
        <dbReference type="PROSITE-ProRule" id="PRU10138"/>
    </source>
</evidence>
<evidence type="ECO:0000269" key="6">
    <source>
    </source>
</evidence>
<evidence type="ECO:0000269" key="7">
    <source>
    </source>
</evidence>
<evidence type="ECO:0000269" key="8">
    <source>
    </source>
</evidence>
<evidence type="ECO:0000269" key="9">
    <source>
    </source>
</evidence>
<evidence type="ECO:0000269" key="10">
    <source>
    </source>
</evidence>
<evidence type="ECO:0000269" key="11">
    <source>
    </source>
</evidence>
<evidence type="ECO:0000269" key="12">
    <source>
    </source>
</evidence>
<evidence type="ECO:0000269" key="13">
    <source>
    </source>
</evidence>
<evidence type="ECO:0000303" key="14">
    <source>
    </source>
</evidence>
<evidence type="ECO:0000303" key="15">
    <source>
    </source>
</evidence>
<evidence type="ECO:0000303" key="16">
    <source>
    </source>
</evidence>
<evidence type="ECO:0000303" key="17">
    <source ref="6"/>
</evidence>
<evidence type="ECO:0000305" key="18"/>
<evidence type="ECO:0000305" key="19">
    <source>
    </source>
</evidence>
<evidence type="ECO:0000305" key="20">
    <source>
    </source>
</evidence>
<evidence type="ECO:0000312" key="21">
    <source>
        <dbReference type="HGNC" id="HGNC:7102"/>
    </source>
</evidence>
<sequence>MLRAPGCLLRTSVAPAAALAAALLSSLARCSLLEPRDPVASSLSPYFGTKTRYEDVNPVLLSGPEAPWRDPELLEGTCTPVQLVALIRHGTRYPTVKQIRKLRQLHGLLQARGSRDGGASSTGSRDLGAALADWPLWYADWMDGQLVEKGRQDMRQLALRLASLFPALFSRENYGRLRLITSSKHRCMDSSAAFLQGLWQHYHPGLPPPDVADMEFGPPTVNDKLMRFFDHCEKFLTEVEKNATALYHVEAFKTGPEMQNILKKVAATLQVPVNDLNADLIQVAFFTCSFDLAIKGVKSPWCDVFDIDDAKVLEYLNDLKQYWKRGYGYTINSRSSCTLFQDIFQHLDKAVEQKQRSQPISSPVILQFGHAETLLPLLSLMGYFKDKEPLTAYNYKKQMHRKFRSGLIVPYASNLIFVLYHCENAKTPKEQFRVQMLLNEKVLPLAYSQETVSFYEDLKNHYKDILQSCQTSEECELARANSTSDEL</sequence>
<proteinExistence type="evidence at protein level"/>
<keyword id="KW-0025">Alternative splicing</keyword>
<keyword id="KW-1003">Cell membrane</keyword>
<keyword id="KW-0225">Disease variant</keyword>
<keyword id="KW-0256">Endoplasmic reticulum</keyword>
<keyword id="KW-0325">Glycoprotein</keyword>
<keyword id="KW-0378">Hydrolase</keyword>
<keyword id="KW-0472">Membrane</keyword>
<keyword id="KW-1267">Proteomics identification</keyword>
<keyword id="KW-1185">Reference proteome</keyword>
<keyword id="KW-0964">Secreted</keyword>
<keyword id="KW-0732">Signal</keyword>
<accession>Q9UNW1</accession>
<accession>F5H683</accession>
<accession>O95172</accession>
<accession>O95286</accession>
<accession>Q59EJ2</accession>
<accession>Q9UGA3</accession>